<organism>
    <name type="scientific">Sus scrofa</name>
    <name type="common">Pig</name>
    <dbReference type="NCBI Taxonomy" id="9823"/>
    <lineage>
        <taxon>Eukaryota</taxon>
        <taxon>Metazoa</taxon>
        <taxon>Chordata</taxon>
        <taxon>Craniata</taxon>
        <taxon>Vertebrata</taxon>
        <taxon>Euteleostomi</taxon>
        <taxon>Mammalia</taxon>
        <taxon>Eutheria</taxon>
        <taxon>Laurasiatheria</taxon>
        <taxon>Artiodactyla</taxon>
        <taxon>Suina</taxon>
        <taxon>Suidae</taxon>
        <taxon>Sus</taxon>
    </lineage>
</organism>
<protein>
    <recommendedName>
        <fullName evidence="4">Plasma membrane calcium-transporting ATPase 1</fullName>
        <ecNumber evidence="2">7.2.2.10</ecNumber>
    </recommendedName>
    <alternativeName>
        <fullName evidence="4">Plasma membrane calcium ATPase isoform 1</fullName>
        <shortName evidence="4">PMCA1</shortName>
    </alternativeName>
    <alternativeName>
        <fullName evidence="8">Plasma membrane calcium pump isoform 1</fullName>
    </alternativeName>
</protein>
<comment type="function">
    <text evidence="2 4">Catalyzes the hydrolysis of ATP coupled with the transport of calcium from the cytoplasm to the extracellular space thereby maintaining intracellular calcium homeostasis. Plays a role in blood pressure regulation through regulation of intracellular calcium concentration and nitric oxide production leading to regulation of vascular smooth muscle cells vasoconstriction. Positively regulates bone mineralization through absorption of calcium from the intestine. Plays dual roles in osteoclast differentiation and survival by regulating RANKL-induced calcium oscillations in preosteoclasts and mediating calcium extrusion in mature osteoclasts (By similarity). Regulates insulin sensitivity through calcium/calmodulin signaling pathway by regulating AKT1 activation and NOS3 activation in endothelial cells (By similarity). May play a role in synaptic transmission by modulating calcium and proton dynamics at the synaptic vesicles.</text>
</comment>
<comment type="catalytic activity">
    <reaction evidence="2">
        <text>Ca(2+)(in) + ATP + H2O = Ca(2+)(out) + ADP + phosphate + H(+)</text>
        <dbReference type="Rhea" id="RHEA:18105"/>
        <dbReference type="ChEBI" id="CHEBI:15377"/>
        <dbReference type="ChEBI" id="CHEBI:15378"/>
        <dbReference type="ChEBI" id="CHEBI:29108"/>
        <dbReference type="ChEBI" id="CHEBI:30616"/>
        <dbReference type="ChEBI" id="CHEBI:43474"/>
        <dbReference type="ChEBI" id="CHEBI:456216"/>
        <dbReference type="EC" id="7.2.2.10"/>
    </reaction>
    <physiologicalReaction direction="left-to-right" evidence="2">
        <dbReference type="Rhea" id="RHEA:18106"/>
    </physiologicalReaction>
</comment>
<comment type="subunit">
    <text evidence="2 4">Monomer. Dimer. Oligomer. Calmodulin binding. Interacts with PDZD11. Interacts with SLC35G1 and STIM1. Interacts with YWHAE; interacts with the monomeric and dimeric forms of the YWHAE but prefer the monomer form; this interaction inhibits calcium-transporting ATPase activity (By similarity). Interacts with NPTN; this interaction stabilizes ATP2B1 and increases ATPase activity; this interaction controls T cell calcium homeostasis following T cell activation. Interacts with EPB41; regulates small intestinal calcium absorption through regulation of membrane expression of ATP2B1 (By similarity).</text>
</comment>
<comment type="subcellular location">
    <subcellularLocation>
        <location evidence="4">Cell membrane</location>
        <topology evidence="6">Multi-pass membrane protein</topology>
    </subcellularLocation>
    <subcellularLocation>
        <location evidence="2">Basolateral cell membrane</location>
    </subcellularLocation>
    <subcellularLocation>
        <location evidence="2">Synapse</location>
    </subcellularLocation>
    <subcellularLocation>
        <location evidence="2">Presynaptic cell membrane</location>
        <topology evidence="6">Multi-pass membrane protein</topology>
    </subcellularLocation>
    <subcellularLocation>
        <location evidence="2">Cytoplasmic vesicle</location>
        <location evidence="2">Secretory vesicle</location>
        <location evidence="2">Synaptic vesicle membrane</location>
        <topology evidence="6">Multi-pass membrane protein</topology>
    </subcellularLocation>
    <text evidence="2">Colocalizes with SV2A in photoreceptor synaptic terminals. Colocalizes with NPTN to the immunological synapse. Colocalizes with EPB41 to the basolateral membrane in enterocyte. Preferentially sorted to recycling synaptic vesicles.</text>
</comment>
<comment type="similarity">
    <text evidence="9">Belongs to the cation transport ATPase (P-type) (TC 3.A.3) family. Type IIB subfamily.</text>
</comment>
<sequence>MGDMANNSVAYGGVKNSLKEANHDGDFGITLADVRALMELRSTDALRKIQESYGDVYGICTRLKTSPVEGLSGNPADIERREAVFGKNFIPPKKPKTFLQLVWEALQDVTLIILEIAAIVSLGLSFYQPPEGDNALCGEVSVGEEEGEGETGWIEGAAILLSVVCVVLVTAFNDWSKEKQFRGLQSRIEQEQKFTVIRGGQVIQIPVADITVGDIAQVKYGDLLPADGILIQGNDLKIDESSLTGESDHVKKSLDKDPLLLSGTHVMEGSGRMVVTAVGINSQTGIIFTLLGAGGEEEEKKDEKKKEKKNKKQDGAIENRNKAKAQDGAAMEMQPLKSEEGGDGDEKDKKKANLPKKEKSVLQGKLTKLAVQIGKAGLLMSAITVIILVLYFVIDTFWVQKRPWLAECTPIYIQYFVKFFIIGVTVLVVAVPEGLPLAVTISLAYSVKKMMKDNNLVRHLDACETMGNATAICSDKTGTLTMNRMTVVQAYINEKHYKKIPEPEAIPPNILSYLVTGISVNCAYTSKILPPEKEGGLPRHVGNKTECALLGLLLDLKRDYQDVRNEIPEEALYKVYTFNSVRKSMSTVLKNSDGSYRIFSKGASEIILKKCFKILSANGEAKVFRPRDRDDIVKTVIEPMASEGLRTICLAFRDFPAGEPEPEWDNENDIVTGLTCIAVVGIEDPVRPEVPDAIKKCQRAGITVRMVTGDNINTARAIATKCGILHPGEDFLCLEGKDFNRRIRNEKGEIEQERIDKIWPKLRVLARSSPTDKHTLVKGIIDSTVSDQRQVVAVTGDGTNDGPALKKADVGFAMGIAGTDVAKEASDIILTDDNFTSIVKAVMWGRNVYDSISKFLQFQLTVNVVAVIVAFTGACITQDSPLKAVQMLWVNLIMDTLASLALATEPPTESLLLRKPYGRNKPLISRTMMKNILGHAFYQLVVVFTLLFAGEKFFDIDSGRNAPLHAPPSEHYTIVFNTFVLMQLFNEINARKIHGERNVFEGIFNNAIFCTIVLGTFVVQIIIVQFGGKPFSCSELSIEQWLWSIFLGMGTLLWGQLISTIPTSRLKFLKEAGHGTQKEEIPEEELAEDVEEIDHAERELRRGQILWFRGLNRIQTQIRVVNAFRSSLYEGLEKPESRSSIHNFMTHPEFRIEDSEPHIPLIDDTDAEDDAPTKRNCSPPPSPNKNNNAVDSGIYLTIEMNKSATSSSPGSPLHSLETSL</sequence>
<dbReference type="EC" id="7.2.2.10" evidence="2"/>
<dbReference type="EMBL" id="X53456">
    <property type="protein sequence ID" value="CAA37536.1"/>
    <property type="molecule type" value="mRNA"/>
</dbReference>
<dbReference type="PIR" id="S13057">
    <property type="entry name" value="S13057"/>
</dbReference>
<dbReference type="RefSeq" id="NP_999517.1">
    <property type="nucleotide sequence ID" value="NM_214352.3"/>
</dbReference>
<dbReference type="SMR" id="P23220"/>
<dbReference type="FunCoup" id="P23220">
    <property type="interactions" value="1299"/>
</dbReference>
<dbReference type="STRING" id="9823.ENSSSCP00000038808"/>
<dbReference type="PaxDb" id="9823-ENSSSCP00000000984"/>
<dbReference type="PeptideAtlas" id="P23220"/>
<dbReference type="GeneID" id="397636"/>
<dbReference type="KEGG" id="ssc:397636"/>
<dbReference type="CTD" id="490"/>
<dbReference type="eggNOG" id="KOG0204">
    <property type="taxonomic scope" value="Eukaryota"/>
</dbReference>
<dbReference type="InParanoid" id="P23220"/>
<dbReference type="OrthoDB" id="116380at2759"/>
<dbReference type="BRENDA" id="7.2.2.10">
    <property type="organism ID" value="6170"/>
</dbReference>
<dbReference type="Proteomes" id="UP000008227">
    <property type="component" value="Unplaced"/>
</dbReference>
<dbReference type="Proteomes" id="UP000314985">
    <property type="component" value="Unplaced"/>
</dbReference>
<dbReference type="Proteomes" id="UP000694570">
    <property type="component" value="Unplaced"/>
</dbReference>
<dbReference type="Proteomes" id="UP000694571">
    <property type="component" value="Unplaced"/>
</dbReference>
<dbReference type="Proteomes" id="UP000694720">
    <property type="component" value="Unplaced"/>
</dbReference>
<dbReference type="Proteomes" id="UP000694722">
    <property type="component" value="Unplaced"/>
</dbReference>
<dbReference type="Proteomes" id="UP000694723">
    <property type="component" value="Unplaced"/>
</dbReference>
<dbReference type="Proteomes" id="UP000694724">
    <property type="component" value="Unplaced"/>
</dbReference>
<dbReference type="Proteomes" id="UP000694725">
    <property type="component" value="Unplaced"/>
</dbReference>
<dbReference type="Proteomes" id="UP000694726">
    <property type="component" value="Unplaced"/>
</dbReference>
<dbReference type="Proteomes" id="UP000694727">
    <property type="component" value="Unplaced"/>
</dbReference>
<dbReference type="Proteomes" id="UP000694728">
    <property type="component" value="Unplaced"/>
</dbReference>
<dbReference type="GO" id="GO:0016323">
    <property type="term" value="C:basolateral plasma membrane"/>
    <property type="evidence" value="ECO:0000250"/>
    <property type="project" value="UniProtKB"/>
</dbReference>
<dbReference type="GO" id="GO:0042995">
    <property type="term" value="C:cell projection"/>
    <property type="evidence" value="ECO:0007669"/>
    <property type="project" value="UniProtKB-KW"/>
</dbReference>
<dbReference type="GO" id="GO:0001772">
    <property type="term" value="C:immunological synapse"/>
    <property type="evidence" value="ECO:0000250"/>
    <property type="project" value="UniProtKB"/>
</dbReference>
<dbReference type="GO" id="GO:0043231">
    <property type="term" value="C:intracellular membrane-bounded organelle"/>
    <property type="evidence" value="ECO:0000318"/>
    <property type="project" value="GO_Central"/>
</dbReference>
<dbReference type="GO" id="GO:0005886">
    <property type="term" value="C:plasma membrane"/>
    <property type="evidence" value="ECO:0000318"/>
    <property type="project" value="GO_Central"/>
</dbReference>
<dbReference type="GO" id="GO:0042734">
    <property type="term" value="C:presynaptic membrane"/>
    <property type="evidence" value="ECO:0000250"/>
    <property type="project" value="UniProtKB"/>
</dbReference>
<dbReference type="GO" id="GO:0030672">
    <property type="term" value="C:synaptic vesicle membrane"/>
    <property type="evidence" value="ECO:0000250"/>
    <property type="project" value="UniProtKB"/>
</dbReference>
<dbReference type="GO" id="GO:0005524">
    <property type="term" value="F:ATP binding"/>
    <property type="evidence" value="ECO:0007669"/>
    <property type="project" value="UniProtKB-KW"/>
</dbReference>
<dbReference type="GO" id="GO:0016887">
    <property type="term" value="F:ATP hydrolysis activity"/>
    <property type="evidence" value="ECO:0000250"/>
    <property type="project" value="UniProtKB"/>
</dbReference>
<dbReference type="GO" id="GO:0005516">
    <property type="term" value="F:calmodulin binding"/>
    <property type="evidence" value="ECO:0007669"/>
    <property type="project" value="UniProtKB-KW"/>
</dbReference>
<dbReference type="GO" id="GO:0046872">
    <property type="term" value="F:metal ion binding"/>
    <property type="evidence" value="ECO:0007669"/>
    <property type="project" value="UniProtKB-KW"/>
</dbReference>
<dbReference type="GO" id="GO:0005388">
    <property type="term" value="F:P-type calcium transporter activity"/>
    <property type="evidence" value="ECO:0000318"/>
    <property type="project" value="GO_Central"/>
</dbReference>
<dbReference type="GO" id="GO:0006874">
    <property type="term" value="P:intracellular calcium ion homeostasis"/>
    <property type="evidence" value="ECO:0000250"/>
    <property type="project" value="UniProtKB"/>
</dbReference>
<dbReference type="GO" id="GO:0001818">
    <property type="term" value="P:negative regulation of cytokine production"/>
    <property type="evidence" value="ECO:0000250"/>
    <property type="project" value="UniProtKB"/>
</dbReference>
<dbReference type="GO" id="GO:0051481">
    <property type="term" value="P:negative regulation of cytosolic calcium ion concentration"/>
    <property type="evidence" value="ECO:0000250"/>
    <property type="project" value="UniProtKB"/>
</dbReference>
<dbReference type="GO" id="GO:0030501">
    <property type="term" value="P:positive regulation of bone mineralization"/>
    <property type="evidence" value="ECO:0000250"/>
    <property type="project" value="UniProtKB"/>
</dbReference>
<dbReference type="GO" id="GO:0051928">
    <property type="term" value="P:positive regulation of calcium ion transport"/>
    <property type="evidence" value="ECO:0000250"/>
    <property type="project" value="UniProtKB"/>
</dbReference>
<dbReference type="GO" id="GO:0008217">
    <property type="term" value="P:regulation of blood pressure"/>
    <property type="evidence" value="ECO:0000250"/>
    <property type="project" value="UniProtKB"/>
</dbReference>
<dbReference type="GO" id="GO:1900076">
    <property type="term" value="P:regulation of cellular response to insulin stimulus"/>
    <property type="evidence" value="ECO:0000250"/>
    <property type="project" value="UniProtKB"/>
</dbReference>
<dbReference type="GO" id="GO:0051480">
    <property type="term" value="P:regulation of cytosolic calcium ion concentration"/>
    <property type="evidence" value="ECO:0000250"/>
    <property type="project" value="UniProtKB"/>
</dbReference>
<dbReference type="GO" id="GO:0003056">
    <property type="term" value="P:regulation of vascular associated smooth muscle contraction"/>
    <property type="evidence" value="ECO:0000250"/>
    <property type="project" value="UniProtKB"/>
</dbReference>
<dbReference type="CDD" id="cd02081">
    <property type="entry name" value="P-type_ATPase_Ca_PMCA-like"/>
    <property type="match status" value="1"/>
</dbReference>
<dbReference type="FunFam" id="1.20.1110.10:FF:000001">
    <property type="entry name" value="Calcium-transporting ATPase"/>
    <property type="match status" value="1"/>
</dbReference>
<dbReference type="FunFam" id="1.20.1110.10:FF:000002">
    <property type="entry name" value="Calcium-transporting ATPase"/>
    <property type="match status" value="1"/>
</dbReference>
<dbReference type="FunFam" id="1.20.1110.10:FF:000008">
    <property type="entry name" value="Calcium-transporting ATPase"/>
    <property type="match status" value="1"/>
</dbReference>
<dbReference type="FunFam" id="2.70.150.10:FF:000001">
    <property type="entry name" value="Calcium-transporting ATPase"/>
    <property type="match status" value="1"/>
</dbReference>
<dbReference type="FunFam" id="3.40.1110.10:FF:000002">
    <property type="entry name" value="Calcium-transporting ATPase"/>
    <property type="match status" value="1"/>
</dbReference>
<dbReference type="FunFam" id="3.40.50.1000:FF:000007">
    <property type="entry name" value="Calcium-transporting ATPase"/>
    <property type="match status" value="1"/>
</dbReference>
<dbReference type="Gene3D" id="3.40.1110.10">
    <property type="entry name" value="Calcium-transporting ATPase, cytoplasmic domain N"/>
    <property type="match status" value="1"/>
</dbReference>
<dbReference type="Gene3D" id="2.70.150.10">
    <property type="entry name" value="Calcium-transporting ATPase, cytoplasmic transduction domain A"/>
    <property type="match status" value="1"/>
</dbReference>
<dbReference type="Gene3D" id="1.20.1110.10">
    <property type="entry name" value="Calcium-transporting ATPase, transmembrane domain"/>
    <property type="match status" value="3"/>
</dbReference>
<dbReference type="Gene3D" id="3.40.50.1000">
    <property type="entry name" value="HAD superfamily/HAD-like"/>
    <property type="match status" value="1"/>
</dbReference>
<dbReference type="InterPro" id="IPR022141">
    <property type="entry name" value="ATP_Ca_trans_C"/>
</dbReference>
<dbReference type="InterPro" id="IPR006068">
    <property type="entry name" value="ATPase_P-typ_cation-transptr_C"/>
</dbReference>
<dbReference type="InterPro" id="IPR004014">
    <property type="entry name" value="ATPase_P-typ_cation-transptr_N"/>
</dbReference>
<dbReference type="InterPro" id="IPR023299">
    <property type="entry name" value="ATPase_P-typ_cyto_dom_N"/>
</dbReference>
<dbReference type="InterPro" id="IPR018303">
    <property type="entry name" value="ATPase_P-typ_P_site"/>
</dbReference>
<dbReference type="InterPro" id="IPR023298">
    <property type="entry name" value="ATPase_P-typ_TM_dom_sf"/>
</dbReference>
<dbReference type="InterPro" id="IPR008250">
    <property type="entry name" value="ATPase_P-typ_transduc_dom_A_sf"/>
</dbReference>
<dbReference type="InterPro" id="IPR036412">
    <property type="entry name" value="HAD-like_sf"/>
</dbReference>
<dbReference type="InterPro" id="IPR023214">
    <property type="entry name" value="HAD_sf"/>
</dbReference>
<dbReference type="InterPro" id="IPR006408">
    <property type="entry name" value="P-type_ATPase_IIB"/>
</dbReference>
<dbReference type="InterPro" id="IPR001757">
    <property type="entry name" value="P_typ_ATPase"/>
</dbReference>
<dbReference type="InterPro" id="IPR044492">
    <property type="entry name" value="P_typ_ATPase_HD_dom"/>
</dbReference>
<dbReference type="NCBIfam" id="TIGR01517">
    <property type="entry name" value="ATPase-IIB_Ca"/>
    <property type="match status" value="1"/>
</dbReference>
<dbReference type="NCBIfam" id="TIGR01494">
    <property type="entry name" value="ATPase_P-type"/>
    <property type="match status" value="3"/>
</dbReference>
<dbReference type="PANTHER" id="PTHR24093">
    <property type="entry name" value="CATION TRANSPORTING ATPASE"/>
    <property type="match status" value="1"/>
</dbReference>
<dbReference type="PANTHER" id="PTHR24093:SF245">
    <property type="entry name" value="PLASMA MEMBRANE CALCIUM-TRANSPORTING ATPASE 1"/>
    <property type="match status" value="1"/>
</dbReference>
<dbReference type="Pfam" id="PF12424">
    <property type="entry name" value="ATP_Ca_trans_C"/>
    <property type="match status" value="1"/>
</dbReference>
<dbReference type="Pfam" id="PF13246">
    <property type="entry name" value="Cation_ATPase"/>
    <property type="match status" value="1"/>
</dbReference>
<dbReference type="Pfam" id="PF00689">
    <property type="entry name" value="Cation_ATPase_C"/>
    <property type="match status" value="1"/>
</dbReference>
<dbReference type="Pfam" id="PF00690">
    <property type="entry name" value="Cation_ATPase_N"/>
    <property type="match status" value="1"/>
</dbReference>
<dbReference type="Pfam" id="PF00122">
    <property type="entry name" value="E1-E2_ATPase"/>
    <property type="match status" value="2"/>
</dbReference>
<dbReference type="Pfam" id="PF00702">
    <property type="entry name" value="Hydrolase"/>
    <property type="match status" value="1"/>
</dbReference>
<dbReference type="PRINTS" id="PR00119">
    <property type="entry name" value="CATATPASE"/>
</dbReference>
<dbReference type="SFLD" id="SFLDS00003">
    <property type="entry name" value="Haloacid_Dehalogenase"/>
    <property type="match status" value="1"/>
</dbReference>
<dbReference type="SFLD" id="SFLDF00027">
    <property type="entry name" value="p-type_atpase"/>
    <property type="match status" value="1"/>
</dbReference>
<dbReference type="SMART" id="SM00831">
    <property type="entry name" value="Cation_ATPase_N"/>
    <property type="match status" value="1"/>
</dbReference>
<dbReference type="SUPFAM" id="SSF81653">
    <property type="entry name" value="Calcium ATPase, transduction domain A"/>
    <property type="match status" value="1"/>
</dbReference>
<dbReference type="SUPFAM" id="SSF81665">
    <property type="entry name" value="Calcium ATPase, transmembrane domain M"/>
    <property type="match status" value="1"/>
</dbReference>
<dbReference type="SUPFAM" id="SSF56784">
    <property type="entry name" value="HAD-like"/>
    <property type="match status" value="1"/>
</dbReference>
<dbReference type="SUPFAM" id="SSF81660">
    <property type="entry name" value="Metal cation-transporting ATPase, ATP-binding domain N"/>
    <property type="match status" value="1"/>
</dbReference>
<dbReference type="PROSITE" id="PS00154">
    <property type="entry name" value="ATPASE_E1_E2"/>
    <property type="match status" value="1"/>
</dbReference>
<evidence type="ECO:0000250" key="1"/>
<evidence type="ECO:0000250" key="2">
    <source>
        <dbReference type="UniProtKB" id="G5E829"/>
    </source>
</evidence>
<evidence type="ECO:0000250" key="3">
    <source>
        <dbReference type="UniProtKB" id="P11505"/>
    </source>
</evidence>
<evidence type="ECO:0000250" key="4">
    <source>
        <dbReference type="UniProtKB" id="P20020"/>
    </source>
</evidence>
<evidence type="ECO:0000250" key="5">
    <source>
        <dbReference type="UniProtKB" id="Q5ZWR1"/>
    </source>
</evidence>
<evidence type="ECO:0000255" key="6"/>
<evidence type="ECO:0000256" key="7">
    <source>
        <dbReference type="SAM" id="MobiDB-lite"/>
    </source>
</evidence>
<evidence type="ECO:0000303" key="8">
    <source>
    </source>
</evidence>
<evidence type="ECO:0000305" key="9"/>
<gene>
    <name evidence="4" type="primary">ATP2B1</name>
</gene>
<proteinExistence type="evidence at transcript level"/>
<accession>P23220</accession>
<keyword id="KW-0007">Acetylation</keyword>
<keyword id="KW-0067">ATP-binding</keyword>
<keyword id="KW-0106">Calcium</keyword>
<keyword id="KW-0109">Calcium transport</keyword>
<keyword id="KW-0112">Calmodulin-binding</keyword>
<keyword id="KW-1003">Cell membrane</keyword>
<keyword id="KW-0966">Cell projection</keyword>
<keyword id="KW-0968">Cytoplasmic vesicle</keyword>
<keyword id="KW-0406">Ion transport</keyword>
<keyword id="KW-0460">Magnesium</keyword>
<keyword id="KW-0472">Membrane</keyword>
<keyword id="KW-0479">Metal-binding</keyword>
<keyword id="KW-0547">Nucleotide-binding</keyword>
<keyword id="KW-0597">Phosphoprotein</keyword>
<keyword id="KW-1185">Reference proteome</keyword>
<keyword id="KW-0770">Synapse</keyword>
<keyword id="KW-1278">Translocase</keyword>
<keyword id="KW-0812">Transmembrane</keyword>
<keyword id="KW-1133">Transmembrane helix</keyword>
<keyword id="KW-0813">Transport</keyword>
<feature type="initiator methionine" description="Removed" evidence="4">
    <location>
        <position position="1"/>
    </location>
</feature>
<feature type="chain" id="PRO_0000046210" description="Plasma membrane calcium-transporting ATPase 1">
    <location>
        <begin position="2"/>
        <end position="1220"/>
    </location>
</feature>
<feature type="topological domain" description="Cytoplasmic" evidence="9">
    <location>
        <begin position="2"/>
        <end position="105"/>
    </location>
</feature>
<feature type="transmembrane region" description="Helical" evidence="4">
    <location>
        <begin position="106"/>
        <end position="126"/>
    </location>
</feature>
<feature type="topological domain" description="Extracellular" evidence="9">
    <location>
        <begin position="127"/>
        <end position="154"/>
    </location>
</feature>
<feature type="transmembrane region" description="Helical" evidence="4">
    <location>
        <begin position="155"/>
        <end position="175"/>
    </location>
</feature>
<feature type="topological domain" description="Cytoplasmic" evidence="9">
    <location>
        <begin position="176"/>
        <end position="366"/>
    </location>
</feature>
<feature type="transmembrane region" description="Helical" evidence="4">
    <location>
        <begin position="367"/>
        <end position="386"/>
    </location>
</feature>
<feature type="topological domain" description="Extracellular" evidence="9">
    <location>
        <begin position="387"/>
        <end position="418"/>
    </location>
</feature>
<feature type="transmembrane region" description="Helical" evidence="6">
    <location>
        <begin position="419"/>
        <end position="439"/>
    </location>
</feature>
<feature type="topological domain" description="Cytoplasmic" evidence="9">
    <location>
        <begin position="440"/>
        <end position="855"/>
    </location>
</feature>
<feature type="transmembrane region" description="Helical" evidence="6">
    <location>
        <begin position="856"/>
        <end position="876"/>
    </location>
</feature>
<feature type="topological domain" description="Extracellular" evidence="9">
    <location>
        <begin position="877"/>
        <end position="882"/>
    </location>
</feature>
<feature type="transmembrane region" description="Helical" evidence="6">
    <location>
        <begin position="883"/>
        <end position="903"/>
    </location>
</feature>
<feature type="topological domain" description="Cytoplasmic" evidence="9">
    <location>
        <begin position="904"/>
        <end position="927"/>
    </location>
</feature>
<feature type="transmembrane region" description="Helical" evidence="4">
    <location>
        <begin position="928"/>
        <end position="948"/>
    </location>
</feature>
<feature type="topological domain" description="Extracellular" evidence="9">
    <location>
        <begin position="949"/>
        <end position="971"/>
    </location>
</feature>
<feature type="transmembrane region" description="Helical" evidence="4">
    <location>
        <begin position="972"/>
        <end position="991"/>
    </location>
</feature>
<feature type="topological domain" description="Cytoplasmic" evidence="9">
    <location>
        <begin position="992"/>
        <end position="1005"/>
    </location>
</feature>
<feature type="transmembrane region" description="Helical" evidence="4">
    <location>
        <begin position="1006"/>
        <end position="1027"/>
    </location>
</feature>
<feature type="topological domain" description="Extracellular" evidence="9">
    <location>
        <begin position="1028"/>
        <end position="1039"/>
    </location>
</feature>
<feature type="transmembrane region" description="Helical" evidence="4">
    <location>
        <begin position="1040"/>
        <end position="1060"/>
    </location>
</feature>
<feature type="topological domain" description="Cytoplasmic" evidence="9">
    <location>
        <begin position="1061"/>
        <end position="1220"/>
    </location>
</feature>
<feature type="region of interest" description="Disordered" evidence="7">
    <location>
        <begin position="297"/>
        <end position="356"/>
    </location>
</feature>
<feature type="region of interest" description="Calmodulin-binding subdomain A" evidence="1">
    <location>
        <begin position="1100"/>
        <end position="1117"/>
    </location>
</feature>
<feature type="region of interest" description="Required for basolateral membrane targeting" evidence="3">
    <location>
        <begin position="1118"/>
        <end position="1220"/>
    </location>
</feature>
<feature type="region of interest" description="Calmodulin-binding subdomain B" evidence="1">
    <location>
        <begin position="1118"/>
        <end position="1127"/>
    </location>
</feature>
<feature type="region of interest" description="Disordered" evidence="7">
    <location>
        <begin position="1160"/>
        <end position="1220"/>
    </location>
</feature>
<feature type="compositionally biased region" description="Basic and acidic residues" evidence="7">
    <location>
        <begin position="312"/>
        <end position="325"/>
    </location>
</feature>
<feature type="compositionally biased region" description="Basic and acidic residues" evidence="7">
    <location>
        <begin position="337"/>
        <end position="356"/>
    </location>
</feature>
<feature type="compositionally biased region" description="Polar residues" evidence="7">
    <location>
        <begin position="1200"/>
        <end position="1220"/>
    </location>
</feature>
<feature type="active site" description="4-aspartylphosphate intermediate" evidence="5">
    <location>
        <position position="475"/>
    </location>
</feature>
<feature type="binding site" evidence="5">
    <location>
        <position position="475"/>
    </location>
    <ligand>
        <name>Mg(2+)</name>
        <dbReference type="ChEBI" id="CHEBI:18420"/>
    </ligand>
</feature>
<feature type="binding site" evidence="5">
    <location>
        <position position="477"/>
    </location>
    <ligand>
        <name>Mg(2+)</name>
        <dbReference type="ChEBI" id="CHEBI:18420"/>
    </ligand>
</feature>
<feature type="binding site" evidence="5">
    <location>
        <position position="797"/>
    </location>
    <ligand>
        <name>Mg(2+)</name>
        <dbReference type="ChEBI" id="CHEBI:18420"/>
    </ligand>
</feature>
<feature type="binding site" evidence="1">
    <location>
        <position position="801"/>
    </location>
    <ligand>
        <name>Mg(2+)</name>
        <dbReference type="ChEBI" id="CHEBI:18420"/>
    </ligand>
</feature>
<feature type="modified residue" description="N-acetylglycine" evidence="4">
    <location>
        <position position="2"/>
    </location>
</feature>
<feature type="modified residue" description="Phosphoserine" evidence="4">
    <location>
        <position position="8"/>
    </location>
</feature>
<feature type="modified residue" description="Phosphoserine" evidence="4">
    <location>
        <position position="17"/>
    </location>
</feature>
<feature type="modified residue" description="Phosphoserine" evidence="2">
    <location>
        <position position="338"/>
    </location>
</feature>
<feature type="modified residue" description="Phosphothreonine; by PKC" evidence="4">
    <location>
        <position position="1116"/>
    </location>
</feature>
<feature type="modified residue" description="Phosphoserine" evidence="3">
    <location>
        <position position="1140"/>
    </location>
</feature>
<feature type="modified residue" description="Phosphoserine" evidence="4">
    <location>
        <position position="1155"/>
    </location>
</feature>
<feature type="modified residue" description="Phosphothreonine" evidence="4">
    <location>
        <position position="1165"/>
    </location>
</feature>
<feature type="modified residue" description="Phosphoserine" evidence="4">
    <location>
        <position position="1178"/>
    </location>
</feature>
<feature type="modified residue" description="Phosphoserine" evidence="4">
    <location>
        <position position="1182"/>
    </location>
</feature>
<reference key="1">
    <citation type="journal article" date="1990" name="Biochem. J.">
        <title>Molecular cloning and sequencing of the plasma-membrane Ca2+ pump of pig smooth muscle.</title>
        <authorList>
            <person name="de Jaegere S."/>
            <person name="Wuytack F."/>
            <person name="Eggermont J.A."/>
            <person name="Verboomen H."/>
            <person name="Casteels R."/>
        </authorList>
    </citation>
    <scope>NUCLEOTIDE SEQUENCE [MRNA]</scope>
    <source>
        <tissue>Stomach smooth muscle</tissue>
    </source>
</reference>
<name>AT2B1_PIG</name>